<keyword id="KW-0012">Acyltransferase</keyword>
<keyword id="KW-0275">Fatty acid biosynthesis</keyword>
<keyword id="KW-0276">Fatty acid metabolism</keyword>
<keyword id="KW-0444">Lipid biosynthesis</keyword>
<keyword id="KW-0443">Lipid metabolism</keyword>
<keyword id="KW-0808">Transferase</keyword>
<protein>
    <recommendedName>
        <fullName>Malonyl CoA-acyl carrier protein transacylase</fullName>
        <shortName>MCT</shortName>
        <ecNumber>2.3.1.39</ecNumber>
    </recommendedName>
</protein>
<name>FABD_STAAW</name>
<reference key="1">
    <citation type="journal article" date="2002" name="Lancet">
        <title>Genome and virulence determinants of high virulence community-acquired MRSA.</title>
        <authorList>
            <person name="Baba T."/>
            <person name="Takeuchi F."/>
            <person name="Kuroda M."/>
            <person name="Yuzawa H."/>
            <person name="Aoki K."/>
            <person name="Oguchi A."/>
            <person name="Nagai Y."/>
            <person name="Iwama N."/>
            <person name="Asano K."/>
            <person name="Naimi T."/>
            <person name="Kuroda H."/>
            <person name="Cui L."/>
            <person name="Yamamoto K."/>
            <person name="Hiramatsu K."/>
        </authorList>
    </citation>
    <scope>NUCLEOTIDE SEQUENCE [LARGE SCALE GENOMIC DNA]</scope>
    <source>
        <strain>MW2</strain>
    </source>
</reference>
<dbReference type="EC" id="2.3.1.39"/>
<dbReference type="EMBL" id="BA000033">
    <property type="protein sequence ID" value="BAB94978.1"/>
    <property type="molecule type" value="Genomic_DNA"/>
</dbReference>
<dbReference type="RefSeq" id="WP_000047343.1">
    <property type="nucleotide sequence ID" value="NC_003923.1"/>
</dbReference>
<dbReference type="SMR" id="Q7A124"/>
<dbReference type="KEGG" id="sam:MW1113"/>
<dbReference type="HOGENOM" id="CLU_030558_0_1_9"/>
<dbReference type="UniPathway" id="UPA00094"/>
<dbReference type="GO" id="GO:0005829">
    <property type="term" value="C:cytosol"/>
    <property type="evidence" value="ECO:0007669"/>
    <property type="project" value="TreeGrafter"/>
</dbReference>
<dbReference type="GO" id="GO:0004314">
    <property type="term" value="F:[acyl-carrier-protein] S-malonyltransferase activity"/>
    <property type="evidence" value="ECO:0007669"/>
    <property type="project" value="UniProtKB-EC"/>
</dbReference>
<dbReference type="GO" id="GO:0006633">
    <property type="term" value="P:fatty acid biosynthetic process"/>
    <property type="evidence" value="ECO:0007669"/>
    <property type="project" value="UniProtKB-UniPathway"/>
</dbReference>
<dbReference type="FunFam" id="3.30.70.250:FF:000001">
    <property type="entry name" value="Malonyl CoA-acyl carrier protein transacylase"/>
    <property type="match status" value="1"/>
</dbReference>
<dbReference type="Gene3D" id="3.30.70.250">
    <property type="entry name" value="Malonyl-CoA ACP transacylase, ACP-binding"/>
    <property type="match status" value="1"/>
</dbReference>
<dbReference type="Gene3D" id="3.40.366.10">
    <property type="entry name" value="Malonyl-Coenzyme A Acyl Carrier Protein, domain 2"/>
    <property type="match status" value="1"/>
</dbReference>
<dbReference type="InterPro" id="IPR001227">
    <property type="entry name" value="Ac_transferase_dom_sf"/>
</dbReference>
<dbReference type="InterPro" id="IPR014043">
    <property type="entry name" value="Acyl_transferase_dom"/>
</dbReference>
<dbReference type="InterPro" id="IPR016035">
    <property type="entry name" value="Acyl_Trfase/lysoPLipase"/>
</dbReference>
<dbReference type="InterPro" id="IPR050858">
    <property type="entry name" value="Mal-CoA-ACP_Trans/PKS_FabD"/>
</dbReference>
<dbReference type="InterPro" id="IPR024925">
    <property type="entry name" value="Malonyl_CoA-ACP_transAc"/>
</dbReference>
<dbReference type="InterPro" id="IPR004410">
    <property type="entry name" value="Malonyl_CoA-ACP_transAc_FabD"/>
</dbReference>
<dbReference type="InterPro" id="IPR016036">
    <property type="entry name" value="Malonyl_transacylase_ACP-bd"/>
</dbReference>
<dbReference type="NCBIfam" id="TIGR00128">
    <property type="entry name" value="fabD"/>
    <property type="match status" value="1"/>
</dbReference>
<dbReference type="PANTHER" id="PTHR42681">
    <property type="entry name" value="MALONYL-COA-ACYL CARRIER PROTEIN TRANSACYLASE, MITOCHONDRIAL"/>
    <property type="match status" value="1"/>
</dbReference>
<dbReference type="PANTHER" id="PTHR42681:SF1">
    <property type="entry name" value="MALONYL-COA-ACYL CARRIER PROTEIN TRANSACYLASE, MITOCHONDRIAL"/>
    <property type="match status" value="1"/>
</dbReference>
<dbReference type="Pfam" id="PF00698">
    <property type="entry name" value="Acyl_transf_1"/>
    <property type="match status" value="1"/>
</dbReference>
<dbReference type="PIRSF" id="PIRSF000446">
    <property type="entry name" value="Mct"/>
    <property type="match status" value="1"/>
</dbReference>
<dbReference type="SMART" id="SM00827">
    <property type="entry name" value="PKS_AT"/>
    <property type="match status" value="1"/>
</dbReference>
<dbReference type="SUPFAM" id="SSF52151">
    <property type="entry name" value="FabD/lysophospholipase-like"/>
    <property type="match status" value="1"/>
</dbReference>
<dbReference type="SUPFAM" id="SSF55048">
    <property type="entry name" value="Probable ACP-binding domain of malonyl-CoA ACP transacylase"/>
    <property type="match status" value="1"/>
</dbReference>
<proteinExistence type="inferred from homology"/>
<feature type="chain" id="PRO_0000194225" description="Malonyl CoA-acyl carrier protein transacylase">
    <location>
        <begin position="1"/>
        <end position="308"/>
    </location>
</feature>
<feature type="active site" evidence="1">
    <location>
        <position position="89"/>
    </location>
</feature>
<feature type="active site" evidence="1">
    <location>
        <position position="199"/>
    </location>
</feature>
<accession>Q7A124</accession>
<comment type="catalytic activity">
    <reaction>
        <text>holo-[ACP] + malonyl-CoA = malonyl-[ACP] + CoA</text>
        <dbReference type="Rhea" id="RHEA:41792"/>
        <dbReference type="Rhea" id="RHEA-COMP:9623"/>
        <dbReference type="Rhea" id="RHEA-COMP:9685"/>
        <dbReference type="ChEBI" id="CHEBI:57287"/>
        <dbReference type="ChEBI" id="CHEBI:57384"/>
        <dbReference type="ChEBI" id="CHEBI:64479"/>
        <dbReference type="ChEBI" id="CHEBI:78449"/>
        <dbReference type="EC" id="2.3.1.39"/>
    </reaction>
</comment>
<comment type="pathway">
    <text>Lipid metabolism; fatty acid biosynthesis.</text>
</comment>
<comment type="similarity">
    <text evidence="2">Belongs to the FabD family.</text>
</comment>
<organism>
    <name type="scientific">Staphylococcus aureus (strain MW2)</name>
    <dbReference type="NCBI Taxonomy" id="196620"/>
    <lineage>
        <taxon>Bacteria</taxon>
        <taxon>Bacillati</taxon>
        <taxon>Bacillota</taxon>
        <taxon>Bacilli</taxon>
        <taxon>Bacillales</taxon>
        <taxon>Staphylococcaceae</taxon>
        <taxon>Staphylococcus</taxon>
    </lineage>
</organism>
<gene>
    <name type="primary">fabD</name>
    <name type="ordered locus">MW1113</name>
</gene>
<evidence type="ECO:0000250" key="1"/>
<evidence type="ECO:0000305" key="2"/>
<sequence>MSKTAIIFPGQGAQKVGMAQDLFNNNDQATEILTSAAKTLDFDILETMFTDEEGKLGETENTQPALLTHSSALLAALKNLNPDFTMGHSLGEYSSLVAADVLSFEDAVKIVRKRGQLMAQAFPTGVGSMAAVLGLDFDKVDEICKSLSSDDKIIEPANINCPGQIVVSGHKALIDELVEKGKSLGAKRVMPLAVSGPFHSSLMKVIEEDFSSYINQFEWRDAKFPVVQNVNAQGETDKEVIKSNMVKQLYSPVQFINSTEWLIDQGVDHFIEIGPGKVLSGLIKKINRDVKLTSIQTLEDVKGWNEND</sequence>